<accession>B4SY47</accession>
<reference key="1">
    <citation type="journal article" date="2011" name="J. Bacteriol.">
        <title>Comparative genomics of 28 Salmonella enterica isolates: evidence for CRISPR-mediated adaptive sublineage evolution.</title>
        <authorList>
            <person name="Fricke W.F."/>
            <person name="Mammel M.K."/>
            <person name="McDermott P.F."/>
            <person name="Tartera C."/>
            <person name="White D.G."/>
            <person name="Leclerc J.E."/>
            <person name="Ravel J."/>
            <person name="Cebula T.A."/>
        </authorList>
    </citation>
    <scope>NUCLEOTIDE SEQUENCE [LARGE SCALE GENOMIC DNA]</scope>
    <source>
        <strain>SL254</strain>
    </source>
</reference>
<comment type="similarity">
    <text evidence="1">Belongs to the elongation factor P family.</text>
</comment>
<protein>
    <recommendedName>
        <fullName evidence="1">Elongation factor P-like protein</fullName>
    </recommendedName>
</protein>
<name>EFPL_SALNS</name>
<evidence type="ECO:0000255" key="1">
    <source>
        <dbReference type="HAMAP-Rule" id="MF_00646"/>
    </source>
</evidence>
<feature type="chain" id="PRO_1000130925" description="Elongation factor P-like protein">
    <location>
        <begin position="1"/>
        <end position="190"/>
    </location>
</feature>
<organism>
    <name type="scientific">Salmonella newport (strain SL254)</name>
    <dbReference type="NCBI Taxonomy" id="423368"/>
    <lineage>
        <taxon>Bacteria</taxon>
        <taxon>Pseudomonadati</taxon>
        <taxon>Pseudomonadota</taxon>
        <taxon>Gammaproteobacteria</taxon>
        <taxon>Enterobacterales</taxon>
        <taxon>Enterobacteriaceae</taxon>
        <taxon>Salmonella</taxon>
    </lineage>
</organism>
<gene>
    <name evidence="1" type="primary">yeiP</name>
    <name type="ordered locus">SNSL254_A2405</name>
</gene>
<proteinExistence type="inferred from homology"/>
<sequence>MPRANEIKKGMVLNYNGKLLIVKDIDIQSPTARGAATLYKMRFSDVRTGLKVEERFKGDDIVDTVTLSRRGVDFSYVDGNEYVFMDKEDYTPYTFTKDQIEEELLFMPEGGMPDMQVLTWDGQLLALELPQTVDLEIVETAPGIKGASASARNKPATLSTGLVIQVPEYLSAGEKIRIHIEERRYMGRAD</sequence>
<dbReference type="EMBL" id="CP001113">
    <property type="protein sequence ID" value="ACF62753.1"/>
    <property type="molecule type" value="Genomic_DNA"/>
</dbReference>
<dbReference type="RefSeq" id="WP_001136822.1">
    <property type="nucleotide sequence ID" value="NZ_CCMR01000002.1"/>
</dbReference>
<dbReference type="SMR" id="B4SY47"/>
<dbReference type="GeneID" id="66756682"/>
<dbReference type="KEGG" id="see:SNSL254_A2405"/>
<dbReference type="HOGENOM" id="CLU_074944_2_0_6"/>
<dbReference type="Proteomes" id="UP000008824">
    <property type="component" value="Chromosome"/>
</dbReference>
<dbReference type="GO" id="GO:0005829">
    <property type="term" value="C:cytosol"/>
    <property type="evidence" value="ECO:0007669"/>
    <property type="project" value="UniProtKB-ARBA"/>
</dbReference>
<dbReference type="GO" id="GO:0003746">
    <property type="term" value="F:translation elongation factor activity"/>
    <property type="evidence" value="ECO:0007669"/>
    <property type="project" value="UniProtKB-UniRule"/>
</dbReference>
<dbReference type="GO" id="GO:0043043">
    <property type="term" value="P:peptide biosynthetic process"/>
    <property type="evidence" value="ECO:0007669"/>
    <property type="project" value="InterPro"/>
</dbReference>
<dbReference type="CDD" id="cd04470">
    <property type="entry name" value="S1_EF-P_repeat_1"/>
    <property type="match status" value="1"/>
</dbReference>
<dbReference type="CDD" id="cd05794">
    <property type="entry name" value="S1_EF-P_repeat_2"/>
    <property type="match status" value="1"/>
</dbReference>
<dbReference type="FunFam" id="2.40.50.140:FF:000004">
    <property type="entry name" value="Elongation factor P"/>
    <property type="match status" value="1"/>
</dbReference>
<dbReference type="FunFam" id="2.30.30.30:FF:000011">
    <property type="entry name" value="Elongation factor P-like protein"/>
    <property type="match status" value="1"/>
</dbReference>
<dbReference type="FunFam" id="2.40.50.140:FF:000053">
    <property type="entry name" value="Elongation factor P-like protein"/>
    <property type="match status" value="1"/>
</dbReference>
<dbReference type="Gene3D" id="2.30.30.30">
    <property type="match status" value="1"/>
</dbReference>
<dbReference type="Gene3D" id="2.40.50.140">
    <property type="entry name" value="Nucleic acid-binding proteins"/>
    <property type="match status" value="2"/>
</dbReference>
<dbReference type="HAMAP" id="MF_00646">
    <property type="entry name" value="EFP"/>
    <property type="match status" value="1"/>
</dbReference>
<dbReference type="InterPro" id="IPR015365">
    <property type="entry name" value="Elong-fact-P_C"/>
</dbReference>
<dbReference type="InterPro" id="IPR012340">
    <property type="entry name" value="NA-bd_OB-fold"/>
</dbReference>
<dbReference type="InterPro" id="IPR014722">
    <property type="entry name" value="Rib_uL2_dom2"/>
</dbReference>
<dbReference type="InterPro" id="IPR020599">
    <property type="entry name" value="Transl_elong_fac_P/YeiP"/>
</dbReference>
<dbReference type="InterPro" id="IPR013185">
    <property type="entry name" value="Transl_elong_KOW-like"/>
</dbReference>
<dbReference type="InterPro" id="IPR011897">
    <property type="entry name" value="Transl_elong_p-like_YeiP"/>
</dbReference>
<dbReference type="InterPro" id="IPR001059">
    <property type="entry name" value="Transl_elong_P/YeiP_cen"/>
</dbReference>
<dbReference type="InterPro" id="IPR013852">
    <property type="entry name" value="Transl_elong_P/YeiP_CS"/>
</dbReference>
<dbReference type="InterPro" id="IPR008991">
    <property type="entry name" value="Translation_prot_SH3-like_sf"/>
</dbReference>
<dbReference type="NCBIfam" id="NF001810">
    <property type="entry name" value="PRK00529.1"/>
    <property type="match status" value="1"/>
</dbReference>
<dbReference type="NCBIfam" id="NF003392">
    <property type="entry name" value="PRK04542.1"/>
    <property type="match status" value="1"/>
</dbReference>
<dbReference type="NCBIfam" id="TIGR02178">
    <property type="entry name" value="yeiP"/>
    <property type="match status" value="1"/>
</dbReference>
<dbReference type="PANTHER" id="PTHR30053">
    <property type="entry name" value="ELONGATION FACTOR P"/>
    <property type="match status" value="1"/>
</dbReference>
<dbReference type="PANTHER" id="PTHR30053:SF14">
    <property type="entry name" value="TRANSLATION ELONGATION FACTOR KOW-LIKE DOMAIN-CONTAINING PROTEIN"/>
    <property type="match status" value="1"/>
</dbReference>
<dbReference type="Pfam" id="PF01132">
    <property type="entry name" value="EFP"/>
    <property type="match status" value="1"/>
</dbReference>
<dbReference type="Pfam" id="PF08207">
    <property type="entry name" value="EFP_N"/>
    <property type="match status" value="1"/>
</dbReference>
<dbReference type="Pfam" id="PF09285">
    <property type="entry name" value="Elong-fact-P_C"/>
    <property type="match status" value="1"/>
</dbReference>
<dbReference type="PIRSF" id="PIRSF005901">
    <property type="entry name" value="EF-P"/>
    <property type="match status" value="1"/>
</dbReference>
<dbReference type="SMART" id="SM01185">
    <property type="entry name" value="EFP"/>
    <property type="match status" value="1"/>
</dbReference>
<dbReference type="SMART" id="SM00841">
    <property type="entry name" value="Elong-fact-P_C"/>
    <property type="match status" value="1"/>
</dbReference>
<dbReference type="SUPFAM" id="SSF50249">
    <property type="entry name" value="Nucleic acid-binding proteins"/>
    <property type="match status" value="2"/>
</dbReference>
<dbReference type="SUPFAM" id="SSF50104">
    <property type="entry name" value="Translation proteins SH3-like domain"/>
    <property type="match status" value="1"/>
</dbReference>
<dbReference type="PROSITE" id="PS01275">
    <property type="entry name" value="EFP"/>
    <property type="match status" value="1"/>
</dbReference>